<reference key="1">
    <citation type="submission" date="2007-10" db="EMBL/GenBank/DDBJ databases">
        <title>Complete sequence of chromosome 1 of Burkholderia multivorans ATCC 17616.</title>
        <authorList>
            <person name="Copeland A."/>
            <person name="Lucas S."/>
            <person name="Lapidus A."/>
            <person name="Barry K."/>
            <person name="Glavina del Rio T."/>
            <person name="Dalin E."/>
            <person name="Tice H."/>
            <person name="Pitluck S."/>
            <person name="Chain P."/>
            <person name="Malfatti S."/>
            <person name="Shin M."/>
            <person name="Vergez L."/>
            <person name="Schmutz J."/>
            <person name="Larimer F."/>
            <person name="Land M."/>
            <person name="Hauser L."/>
            <person name="Kyrpides N."/>
            <person name="Kim E."/>
            <person name="Tiedje J."/>
            <person name="Richardson P."/>
        </authorList>
    </citation>
    <scope>NUCLEOTIDE SEQUENCE [LARGE SCALE GENOMIC DNA]</scope>
    <source>
        <strain>ATCC 17616 / 249</strain>
    </source>
</reference>
<reference key="2">
    <citation type="submission" date="2007-04" db="EMBL/GenBank/DDBJ databases">
        <title>Complete genome sequence of Burkholderia multivorans ATCC 17616.</title>
        <authorList>
            <person name="Ohtsubo Y."/>
            <person name="Yamashita A."/>
            <person name="Kurokawa K."/>
            <person name="Takami H."/>
            <person name="Yuhara S."/>
            <person name="Nishiyama E."/>
            <person name="Endo R."/>
            <person name="Miyazaki R."/>
            <person name="Ono A."/>
            <person name="Yano K."/>
            <person name="Ito M."/>
            <person name="Sota M."/>
            <person name="Yuji N."/>
            <person name="Hattori M."/>
            <person name="Tsuda M."/>
        </authorList>
    </citation>
    <scope>NUCLEOTIDE SEQUENCE [LARGE SCALE GENOMIC DNA]</scope>
    <source>
        <strain>ATCC 17616 / 249</strain>
    </source>
</reference>
<organism>
    <name type="scientific">Burkholderia multivorans (strain ATCC 17616 / 249)</name>
    <dbReference type="NCBI Taxonomy" id="395019"/>
    <lineage>
        <taxon>Bacteria</taxon>
        <taxon>Pseudomonadati</taxon>
        <taxon>Pseudomonadota</taxon>
        <taxon>Betaproteobacteria</taxon>
        <taxon>Burkholderiales</taxon>
        <taxon>Burkholderiaceae</taxon>
        <taxon>Burkholderia</taxon>
        <taxon>Burkholderia cepacia complex</taxon>
    </lineage>
</organism>
<feature type="chain" id="PRO_1000093860" description="Holo-[acyl-carrier-protein] synthase">
    <location>
        <begin position="1"/>
        <end position="146"/>
    </location>
</feature>
<feature type="binding site" evidence="1">
    <location>
        <position position="9"/>
    </location>
    <ligand>
        <name>Mg(2+)</name>
        <dbReference type="ChEBI" id="CHEBI:18420"/>
    </ligand>
</feature>
<feature type="binding site" evidence="1">
    <location>
        <position position="63"/>
    </location>
    <ligand>
        <name>Mg(2+)</name>
        <dbReference type="ChEBI" id="CHEBI:18420"/>
    </ligand>
</feature>
<evidence type="ECO:0000255" key="1">
    <source>
        <dbReference type="HAMAP-Rule" id="MF_00101"/>
    </source>
</evidence>
<keyword id="KW-0963">Cytoplasm</keyword>
<keyword id="KW-0275">Fatty acid biosynthesis</keyword>
<keyword id="KW-0276">Fatty acid metabolism</keyword>
<keyword id="KW-0444">Lipid biosynthesis</keyword>
<keyword id="KW-0443">Lipid metabolism</keyword>
<keyword id="KW-0460">Magnesium</keyword>
<keyword id="KW-0479">Metal-binding</keyword>
<keyword id="KW-1185">Reference proteome</keyword>
<keyword id="KW-0808">Transferase</keyword>
<accession>A9ADD4</accession>
<proteinExistence type="inferred from homology"/>
<sequence length="146" mass="15772">MAIYGIGTDIVQVSRVAAVLERTGGRFAEKVLGPDELRVFHARRARSEARGIAFLATRFSAKEAFSKAIGLGMHWPMTWRALQTLNRPSGEPYVVASGELADWLAARGITARVTVSDERDYAVSFVIAETGLPAPDAPTAVSRTTP</sequence>
<gene>
    <name evidence="1" type="primary">acpS</name>
    <name type="ordered locus">Bmul_2166</name>
    <name type="ordered locus">BMULJ_01075</name>
</gene>
<dbReference type="EC" id="2.7.8.7" evidence="1"/>
<dbReference type="EMBL" id="CP000868">
    <property type="protein sequence ID" value="ABX15851.1"/>
    <property type="molecule type" value="Genomic_DNA"/>
</dbReference>
<dbReference type="EMBL" id="AP009385">
    <property type="protein sequence ID" value="BAG43019.1"/>
    <property type="molecule type" value="Genomic_DNA"/>
</dbReference>
<dbReference type="RefSeq" id="WP_006408143.1">
    <property type="nucleotide sequence ID" value="NC_010084.1"/>
</dbReference>
<dbReference type="SMR" id="A9ADD4"/>
<dbReference type="STRING" id="395019.BMULJ_01075"/>
<dbReference type="GeneID" id="89569435"/>
<dbReference type="KEGG" id="bmj:BMULJ_01075"/>
<dbReference type="KEGG" id="bmu:Bmul_2166"/>
<dbReference type="eggNOG" id="COG0736">
    <property type="taxonomic scope" value="Bacteria"/>
</dbReference>
<dbReference type="HOGENOM" id="CLU_089696_3_1_4"/>
<dbReference type="Proteomes" id="UP000008815">
    <property type="component" value="Chromosome 1"/>
</dbReference>
<dbReference type="GO" id="GO:0005737">
    <property type="term" value="C:cytoplasm"/>
    <property type="evidence" value="ECO:0007669"/>
    <property type="project" value="UniProtKB-SubCell"/>
</dbReference>
<dbReference type="GO" id="GO:0008897">
    <property type="term" value="F:holo-[acyl-carrier-protein] synthase activity"/>
    <property type="evidence" value="ECO:0007669"/>
    <property type="project" value="UniProtKB-UniRule"/>
</dbReference>
<dbReference type="GO" id="GO:0000287">
    <property type="term" value="F:magnesium ion binding"/>
    <property type="evidence" value="ECO:0007669"/>
    <property type="project" value="UniProtKB-UniRule"/>
</dbReference>
<dbReference type="GO" id="GO:0006633">
    <property type="term" value="P:fatty acid biosynthetic process"/>
    <property type="evidence" value="ECO:0007669"/>
    <property type="project" value="UniProtKB-UniRule"/>
</dbReference>
<dbReference type="Gene3D" id="3.90.470.20">
    <property type="entry name" value="4'-phosphopantetheinyl transferase domain"/>
    <property type="match status" value="1"/>
</dbReference>
<dbReference type="HAMAP" id="MF_00101">
    <property type="entry name" value="AcpS"/>
    <property type="match status" value="1"/>
</dbReference>
<dbReference type="InterPro" id="IPR008278">
    <property type="entry name" value="4-PPantetheinyl_Trfase_dom"/>
</dbReference>
<dbReference type="InterPro" id="IPR037143">
    <property type="entry name" value="4-PPantetheinyl_Trfase_dom_sf"/>
</dbReference>
<dbReference type="InterPro" id="IPR002582">
    <property type="entry name" value="ACPS"/>
</dbReference>
<dbReference type="InterPro" id="IPR004568">
    <property type="entry name" value="Ppantetheine-prot_Trfase_dom"/>
</dbReference>
<dbReference type="NCBIfam" id="TIGR00516">
    <property type="entry name" value="acpS"/>
    <property type="match status" value="1"/>
</dbReference>
<dbReference type="NCBIfam" id="TIGR00556">
    <property type="entry name" value="pantethn_trn"/>
    <property type="match status" value="1"/>
</dbReference>
<dbReference type="Pfam" id="PF01648">
    <property type="entry name" value="ACPS"/>
    <property type="match status" value="1"/>
</dbReference>
<dbReference type="SUPFAM" id="SSF56214">
    <property type="entry name" value="4'-phosphopantetheinyl transferase"/>
    <property type="match status" value="1"/>
</dbReference>
<protein>
    <recommendedName>
        <fullName evidence="1">Holo-[acyl-carrier-protein] synthase</fullName>
        <shortName evidence="1">Holo-ACP synthase</shortName>
        <ecNumber evidence="1">2.7.8.7</ecNumber>
    </recommendedName>
    <alternativeName>
        <fullName evidence="1">4'-phosphopantetheinyl transferase AcpS</fullName>
    </alternativeName>
</protein>
<name>ACPS_BURM1</name>
<comment type="function">
    <text evidence="1">Transfers the 4'-phosphopantetheine moiety from coenzyme A to a Ser of acyl-carrier-protein.</text>
</comment>
<comment type="catalytic activity">
    <reaction evidence="1">
        <text>apo-[ACP] + CoA = holo-[ACP] + adenosine 3',5'-bisphosphate + H(+)</text>
        <dbReference type="Rhea" id="RHEA:12068"/>
        <dbReference type="Rhea" id="RHEA-COMP:9685"/>
        <dbReference type="Rhea" id="RHEA-COMP:9690"/>
        <dbReference type="ChEBI" id="CHEBI:15378"/>
        <dbReference type="ChEBI" id="CHEBI:29999"/>
        <dbReference type="ChEBI" id="CHEBI:57287"/>
        <dbReference type="ChEBI" id="CHEBI:58343"/>
        <dbReference type="ChEBI" id="CHEBI:64479"/>
        <dbReference type="EC" id="2.7.8.7"/>
    </reaction>
</comment>
<comment type="cofactor">
    <cofactor evidence="1">
        <name>Mg(2+)</name>
        <dbReference type="ChEBI" id="CHEBI:18420"/>
    </cofactor>
</comment>
<comment type="subcellular location">
    <subcellularLocation>
        <location evidence="1">Cytoplasm</location>
    </subcellularLocation>
</comment>
<comment type="similarity">
    <text evidence="1">Belongs to the P-Pant transferase superfamily. AcpS family.</text>
</comment>